<name>NNRD_NEUCR</name>
<feature type="chain" id="PRO_0000416187" description="ATP-dependent (S)-NAD(P)H-hydrate dehydratase">
    <location>
        <begin position="1"/>
        <end position="353"/>
    </location>
</feature>
<feature type="domain" description="YjeF C-terminal" evidence="1">
    <location>
        <begin position="18"/>
        <end position="345"/>
    </location>
</feature>
<feature type="region of interest" description="Disordered" evidence="2">
    <location>
        <begin position="95"/>
        <end position="121"/>
    </location>
</feature>
<feature type="compositionally biased region" description="Low complexity" evidence="2">
    <location>
        <begin position="96"/>
        <end position="114"/>
    </location>
</feature>
<feature type="binding site" evidence="1">
    <location>
        <position position="143"/>
    </location>
    <ligand>
        <name>(6S)-NADPHX</name>
        <dbReference type="ChEBI" id="CHEBI:64076"/>
    </ligand>
</feature>
<feature type="binding site" evidence="1">
    <location>
        <begin position="196"/>
        <end position="202"/>
    </location>
    <ligand>
        <name>(6S)-NADPHX</name>
        <dbReference type="ChEBI" id="CHEBI:64076"/>
    </ligand>
</feature>
<feature type="binding site" evidence="1">
    <location>
        <begin position="241"/>
        <end position="245"/>
    </location>
    <ligand>
        <name>ATP</name>
        <dbReference type="ChEBI" id="CHEBI:30616"/>
    </ligand>
</feature>
<feature type="binding site" evidence="1">
    <location>
        <begin position="260"/>
        <end position="269"/>
    </location>
    <ligand>
        <name>ATP</name>
        <dbReference type="ChEBI" id="CHEBI:30616"/>
    </ligand>
</feature>
<feature type="binding site" evidence="1">
    <location>
        <position position="270"/>
    </location>
    <ligand>
        <name>(6S)-NADPHX</name>
        <dbReference type="ChEBI" id="CHEBI:64076"/>
    </ligand>
</feature>
<dbReference type="EC" id="4.2.1.93" evidence="1"/>
<dbReference type="EMBL" id="CM002236">
    <property type="protein sequence ID" value="EAA36408.1"/>
    <property type="molecule type" value="Genomic_DNA"/>
</dbReference>
<dbReference type="RefSeq" id="XP_965644.1">
    <property type="nucleotide sequence ID" value="XM_960551.3"/>
</dbReference>
<dbReference type="SMR" id="Q7SHU9"/>
<dbReference type="FunCoup" id="Q7SHU9">
    <property type="interactions" value="143"/>
</dbReference>
<dbReference type="STRING" id="367110.Q7SHU9"/>
<dbReference type="PaxDb" id="5141-EFNCRP00000002012"/>
<dbReference type="EnsemblFungi" id="EAA36408">
    <property type="protein sequence ID" value="EAA36408"/>
    <property type="gene ID" value="NCU02513"/>
</dbReference>
<dbReference type="GeneID" id="3881794"/>
<dbReference type="KEGG" id="ncr:NCU02513"/>
<dbReference type="VEuPathDB" id="FungiDB:NCU02513"/>
<dbReference type="HOGENOM" id="CLU_030651_0_0_1"/>
<dbReference type="InParanoid" id="Q7SHU9"/>
<dbReference type="OrthoDB" id="8110916at2759"/>
<dbReference type="Proteomes" id="UP000001805">
    <property type="component" value="Chromosome 1, Linkage Group I"/>
</dbReference>
<dbReference type="GO" id="GO:0005737">
    <property type="term" value="C:cytoplasm"/>
    <property type="evidence" value="ECO:0007669"/>
    <property type="project" value="UniProtKB-SubCell"/>
</dbReference>
<dbReference type="GO" id="GO:0005524">
    <property type="term" value="F:ATP binding"/>
    <property type="evidence" value="ECO:0007669"/>
    <property type="project" value="UniProtKB-KW"/>
</dbReference>
<dbReference type="GO" id="GO:0047453">
    <property type="term" value="F:ATP-dependent NAD(P)H-hydrate dehydratase activity"/>
    <property type="evidence" value="ECO:0000318"/>
    <property type="project" value="GO_Central"/>
</dbReference>
<dbReference type="GO" id="GO:0110051">
    <property type="term" value="P:metabolite repair"/>
    <property type="evidence" value="ECO:0000318"/>
    <property type="project" value="GO_Central"/>
</dbReference>
<dbReference type="GO" id="GO:0046496">
    <property type="term" value="P:nicotinamide nucleotide metabolic process"/>
    <property type="evidence" value="ECO:0007669"/>
    <property type="project" value="UniProtKB-UniRule"/>
</dbReference>
<dbReference type="CDD" id="cd01171">
    <property type="entry name" value="YXKO-related"/>
    <property type="match status" value="1"/>
</dbReference>
<dbReference type="FunFam" id="3.40.1190.20:FF:000043">
    <property type="entry name" value="ATP-dependent (S)-NAD(P)H-hydrate dehydratase"/>
    <property type="match status" value="1"/>
</dbReference>
<dbReference type="Gene3D" id="3.40.1190.20">
    <property type="match status" value="1"/>
</dbReference>
<dbReference type="HAMAP" id="MF_01965">
    <property type="entry name" value="NADHX_dehydratase"/>
    <property type="match status" value="1"/>
</dbReference>
<dbReference type="InterPro" id="IPR017953">
    <property type="entry name" value="Carbohydrate_kinase_pred_CS"/>
</dbReference>
<dbReference type="InterPro" id="IPR000631">
    <property type="entry name" value="CARKD"/>
</dbReference>
<dbReference type="InterPro" id="IPR029056">
    <property type="entry name" value="Ribokinase-like"/>
</dbReference>
<dbReference type="NCBIfam" id="TIGR00196">
    <property type="entry name" value="yjeF_cterm"/>
    <property type="match status" value="1"/>
</dbReference>
<dbReference type="PANTHER" id="PTHR12592:SF0">
    <property type="entry name" value="ATP-DEPENDENT (S)-NAD(P)H-HYDRATE DEHYDRATASE"/>
    <property type="match status" value="1"/>
</dbReference>
<dbReference type="PANTHER" id="PTHR12592">
    <property type="entry name" value="ATP-DEPENDENT (S)-NAD(P)H-HYDRATE DEHYDRATASE FAMILY MEMBER"/>
    <property type="match status" value="1"/>
</dbReference>
<dbReference type="Pfam" id="PF01256">
    <property type="entry name" value="Carb_kinase"/>
    <property type="match status" value="1"/>
</dbReference>
<dbReference type="SUPFAM" id="SSF53613">
    <property type="entry name" value="Ribokinase-like"/>
    <property type="match status" value="1"/>
</dbReference>
<dbReference type="PROSITE" id="PS01050">
    <property type="entry name" value="YJEF_C_2"/>
    <property type="match status" value="1"/>
</dbReference>
<dbReference type="PROSITE" id="PS51383">
    <property type="entry name" value="YJEF_C_3"/>
    <property type="match status" value="1"/>
</dbReference>
<organism>
    <name type="scientific">Neurospora crassa (strain ATCC 24698 / 74-OR23-1A / CBS 708.71 / DSM 1257 / FGSC 987)</name>
    <dbReference type="NCBI Taxonomy" id="367110"/>
    <lineage>
        <taxon>Eukaryota</taxon>
        <taxon>Fungi</taxon>
        <taxon>Dikarya</taxon>
        <taxon>Ascomycota</taxon>
        <taxon>Pezizomycotina</taxon>
        <taxon>Sordariomycetes</taxon>
        <taxon>Sordariomycetidae</taxon>
        <taxon>Sordariales</taxon>
        <taxon>Sordariaceae</taxon>
        <taxon>Neurospora</taxon>
    </lineage>
</organism>
<proteinExistence type="inferred from homology"/>
<gene>
    <name type="ORF">NCU02513</name>
</gene>
<comment type="function">
    <text evidence="1">Catalyzes the dehydration of the S-form of NAD(P)HX at the expense of ATP, which is converted to ADP. Together with NAD(P)HX epimerase, which catalyzes the epimerization of the S- and R-forms, the enzyme allows the repair of both epimers of NAD(P)HX, a damaged form of NAD(P)H that is a result of enzymatic or heat-dependent hydration.</text>
</comment>
<comment type="catalytic activity">
    <reaction evidence="1">
        <text>(6S)-NADHX + ATP = ADP + phosphate + NADH + H(+)</text>
        <dbReference type="Rhea" id="RHEA:19017"/>
        <dbReference type="ChEBI" id="CHEBI:15378"/>
        <dbReference type="ChEBI" id="CHEBI:30616"/>
        <dbReference type="ChEBI" id="CHEBI:43474"/>
        <dbReference type="ChEBI" id="CHEBI:57945"/>
        <dbReference type="ChEBI" id="CHEBI:64074"/>
        <dbReference type="ChEBI" id="CHEBI:456216"/>
        <dbReference type="EC" id="4.2.1.93"/>
    </reaction>
</comment>
<comment type="catalytic activity">
    <reaction>
        <text>(6S)-NADPHX + ATP = ADP + phosphate + NADPH + H(+)</text>
        <dbReference type="Rhea" id="RHEA:32231"/>
        <dbReference type="ChEBI" id="CHEBI:15378"/>
        <dbReference type="ChEBI" id="CHEBI:30616"/>
        <dbReference type="ChEBI" id="CHEBI:43474"/>
        <dbReference type="ChEBI" id="CHEBI:57783"/>
        <dbReference type="ChEBI" id="CHEBI:64076"/>
        <dbReference type="ChEBI" id="CHEBI:456216"/>
        <dbReference type="EC" id="4.2.1.93"/>
    </reaction>
</comment>
<comment type="cofactor">
    <cofactor evidence="1">
        <name>Mg(2+)</name>
        <dbReference type="ChEBI" id="CHEBI:18420"/>
    </cofactor>
</comment>
<comment type="subcellular location">
    <subcellularLocation>
        <location evidence="1">Cytoplasm</location>
    </subcellularLocation>
</comment>
<comment type="similarity">
    <text evidence="1">Belongs to the NnrD/CARKD family.</text>
</comment>
<protein>
    <recommendedName>
        <fullName evidence="1">ATP-dependent (S)-NAD(P)H-hydrate dehydratase</fullName>
        <ecNumber evidence="1">4.2.1.93</ecNumber>
    </recommendedName>
    <alternativeName>
        <fullName evidence="1">ATP-dependent NAD(P)HX dehydratase</fullName>
    </alternativeName>
</protein>
<sequence>MSSESSTGPEMSATTKQMLARVRQMVPPMLEKFHKGQLGRVAVIGGSEDYTGAPYFSAMASARLGADLSHVICTPNAAQVIKTYSPNLMVHPLMRSSPPALSSSDSGSSPSRTKSAPDTDPSQIAAQIIPMLDRLHVLVIGPGLGRDPLMQETCAKVITAAREKGIPMVLDADALLLVTKDPSLIKGYDNAVLTPNVVEFGRLTKALGVDEEVEKAEETAGETAKVEALAKALGGVMVVQKGAKDYLSDGKVTLTVDLKGGLKRSGGQGDTLTGSIATFLGWRRAYLEDLWDHGHKLNKEELIGLAVFGGSAITRECSRLAFAKKGRSLQASDLTDEVHTAFLNLFGEVDAKL</sequence>
<reference key="1">
    <citation type="journal article" date="2003" name="Nature">
        <title>The genome sequence of the filamentous fungus Neurospora crassa.</title>
        <authorList>
            <person name="Galagan J.E."/>
            <person name="Calvo S.E."/>
            <person name="Borkovich K.A."/>
            <person name="Selker E.U."/>
            <person name="Read N.D."/>
            <person name="Jaffe D.B."/>
            <person name="FitzHugh W."/>
            <person name="Ma L.-J."/>
            <person name="Smirnov S."/>
            <person name="Purcell S."/>
            <person name="Rehman B."/>
            <person name="Elkins T."/>
            <person name="Engels R."/>
            <person name="Wang S."/>
            <person name="Nielsen C.B."/>
            <person name="Butler J."/>
            <person name="Endrizzi M."/>
            <person name="Qui D."/>
            <person name="Ianakiev P."/>
            <person name="Bell-Pedersen D."/>
            <person name="Nelson M.A."/>
            <person name="Werner-Washburne M."/>
            <person name="Selitrennikoff C.P."/>
            <person name="Kinsey J.A."/>
            <person name="Braun E.L."/>
            <person name="Zelter A."/>
            <person name="Schulte U."/>
            <person name="Kothe G.O."/>
            <person name="Jedd G."/>
            <person name="Mewes H.-W."/>
            <person name="Staben C."/>
            <person name="Marcotte E."/>
            <person name="Greenberg D."/>
            <person name="Roy A."/>
            <person name="Foley K."/>
            <person name="Naylor J."/>
            <person name="Stange-Thomann N."/>
            <person name="Barrett R."/>
            <person name="Gnerre S."/>
            <person name="Kamal M."/>
            <person name="Kamvysselis M."/>
            <person name="Mauceli E.W."/>
            <person name="Bielke C."/>
            <person name="Rudd S."/>
            <person name="Frishman D."/>
            <person name="Krystofova S."/>
            <person name="Rasmussen C."/>
            <person name="Metzenberg R.L."/>
            <person name="Perkins D.D."/>
            <person name="Kroken S."/>
            <person name="Cogoni C."/>
            <person name="Macino G."/>
            <person name="Catcheside D.E.A."/>
            <person name="Li W."/>
            <person name="Pratt R.J."/>
            <person name="Osmani S.A."/>
            <person name="DeSouza C.P.C."/>
            <person name="Glass N.L."/>
            <person name="Orbach M.J."/>
            <person name="Berglund J.A."/>
            <person name="Voelker R."/>
            <person name="Yarden O."/>
            <person name="Plamann M."/>
            <person name="Seiler S."/>
            <person name="Dunlap J.C."/>
            <person name="Radford A."/>
            <person name="Aramayo R."/>
            <person name="Natvig D.O."/>
            <person name="Alex L.A."/>
            <person name="Mannhaupt G."/>
            <person name="Ebbole D.J."/>
            <person name="Freitag M."/>
            <person name="Paulsen I."/>
            <person name="Sachs M.S."/>
            <person name="Lander E.S."/>
            <person name="Nusbaum C."/>
            <person name="Birren B.W."/>
        </authorList>
    </citation>
    <scope>NUCLEOTIDE SEQUENCE [LARGE SCALE GENOMIC DNA]</scope>
    <source>
        <strain>ATCC 24698 / 74-OR23-1A / CBS 708.71 / DSM 1257 / FGSC 987</strain>
    </source>
</reference>
<accession>Q7SHU9</accession>
<keyword id="KW-0067">ATP-binding</keyword>
<keyword id="KW-0963">Cytoplasm</keyword>
<keyword id="KW-0456">Lyase</keyword>
<keyword id="KW-0520">NAD</keyword>
<keyword id="KW-0521">NADP</keyword>
<keyword id="KW-0547">Nucleotide-binding</keyword>
<keyword id="KW-0597">Phosphoprotein</keyword>
<keyword id="KW-1185">Reference proteome</keyword>
<evidence type="ECO:0000255" key="1">
    <source>
        <dbReference type="HAMAP-Rule" id="MF_03157"/>
    </source>
</evidence>
<evidence type="ECO:0000256" key="2">
    <source>
        <dbReference type="SAM" id="MobiDB-lite"/>
    </source>
</evidence>